<gene>
    <name evidence="1" type="primary">yoaH</name>
    <name type="ordered locus">SPAB_01391</name>
</gene>
<protein>
    <recommendedName>
        <fullName evidence="1">UPF0181 protein YoaH</fullName>
    </recommendedName>
</protein>
<proteinExistence type="inferred from homology"/>
<accession>A9MVU3</accession>
<evidence type="ECO:0000255" key="1">
    <source>
        <dbReference type="HAMAP-Rule" id="MF_00507"/>
    </source>
</evidence>
<comment type="similarity">
    <text evidence="1">Belongs to the UPF0181 family.</text>
</comment>
<organism>
    <name type="scientific">Salmonella paratyphi B (strain ATCC BAA-1250 / SPB7)</name>
    <dbReference type="NCBI Taxonomy" id="1016998"/>
    <lineage>
        <taxon>Bacteria</taxon>
        <taxon>Pseudomonadati</taxon>
        <taxon>Pseudomonadota</taxon>
        <taxon>Gammaproteobacteria</taxon>
        <taxon>Enterobacterales</taxon>
        <taxon>Enterobacteriaceae</taxon>
        <taxon>Salmonella</taxon>
    </lineage>
</organism>
<dbReference type="EMBL" id="CP000886">
    <property type="protein sequence ID" value="ABX66799.1"/>
    <property type="molecule type" value="Genomic_DNA"/>
</dbReference>
<dbReference type="RefSeq" id="WP_000457328.1">
    <property type="nucleotide sequence ID" value="NC_010102.1"/>
</dbReference>
<dbReference type="SMR" id="A9MVU3"/>
<dbReference type="KEGG" id="spq:SPAB_01391"/>
<dbReference type="PATRIC" id="fig|1016998.12.peg.1312"/>
<dbReference type="HOGENOM" id="CLU_185263_0_0_6"/>
<dbReference type="BioCyc" id="SENT1016998:SPAB_RS05695-MONOMER"/>
<dbReference type="Proteomes" id="UP000008556">
    <property type="component" value="Chromosome"/>
</dbReference>
<dbReference type="HAMAP" id="MF_00507">
    <property type="entry name" value="UPF0181"/>
    <property type="match status" value="1"/>
</dbReference>
<dbReference type="InterPro" id="IPR005371">
    <property type="entry name" value="UPF0181"/>
</dbReference>
<dbReference type="NCBIfam" id="NF003476">
    <property type="entry name" value="PRK05114.1"/>
    <property type="match status" value="1"/>
</dbReference>
<dbReference type="Pfam" id="PF03701">
    <property type="entry name" value="UPF0181"/>
    <property type="match status" value="1"/>
</dbReference>
<name>YOAH_SALPB</name>
<feature type="chain" id="PRO_1000081534" description="UPF0181 protein YoaH">
    <location>
        <begin position="1"/>
        <end position="59"/>
    </location>
</feature>
<sequence length="59" mass="6514">MFAGLPSLSHEQQQKAVERIQELMSQGMSSGEAIAQVAGELRANHTGERIVARFEDEDE</sequence>
<reference key="1">
    <citation type="submission" date="2007-11" db="EMBL/GenBank/DDBJ databases">
        <authorList>
            <consortium name="The Salmonella enterica serovar Paratyphi B Genome Sequencing Project"/>
            <person name="McClelland M."/>
            <person name="Sanderson E.K."/>
            <person name="Porwollik S."/>
            <person name="Spieth J."/>
            <person name="Clifton W.S."/>
            <person name="Fulton R."/>
            <person name="Cordes M."/>
            <person name="Wollam A."/>
            <person name="Shah N."/>
            <person name="Pepin K."/>
            <person name="Bhonagiri V."/>
            <person name="Nash W."/>
            <person name="Johnson M."/>
            <person name="Thiruvilangam P."/>
            <person name="Wilson R."/>
        </authorList>
    </citation>
    <scope>NUCLEOTIDE SEQUENCE [LARGE SCALE GENOMIC DNA]</scope>
    <source>
        <strain>ATCC BAA-1250 / SPB7</strain>
    </source>
</reference>